<organism>
    <name type="scientific">Homo sapiens</name>
    <name type="common">Human</name>
    <dbReference type="NCBI Taxonomy" id="9606"/>
    <lineage>
        <taxon>Eukaryota</taxon>
        <taxon>Metazoa</taxon>
        <taxon>Chordata</taxon>
        <taxon>Craniata</taxon>
        <taxon>Vertebrata</taxon>
        <taxon>Euteleostomi</taxon>
        <taxon>Mammalia</taxon>
        <taxon>Eutheria</taxon>
        <taxon>Euarchontoglires</taxon>
        <taxon>Primates</taxon>
        <taxon>Haplorrhini</taxon>
        <taxon>Catarrhini</taxon>
        <taxon>Hominidae</taxon>
        <taxon>Homo</taxon>
    </lineage>
</organism>
<sequence length="519" mass="56968">MASSPAVDVSCRRREKRRQLDARRSKCRIRLGGHMEQWCLLKERLGFSLHSQLAKFLLDRYTSSGCVLCAGPEPLPPKGLQYLVLLSHAHSRECSLVPGLRGPGGQDGGLVWECSAGHTFSWGPSLSPTPSEAPKPASLPHTTRRSWCSEATSGQELADLESEHDERTQEARLPRRVGPPPETFPPPGEEEGEEEEDNDEDEEEMLSDASLWTYSSSPDDSEPDAPRLLPSPVTCTPKEGETPPAPAALSSPLAVPALSASSLSSRAPPPAEVRVQPQLSRTPQAAQQTEALASTGSQAQSAPTPAWDEDTAQIGPKRIRKAAKRELMPCDFPGCGRIFSNRQYLNHHKKYQHIHQKSFSCPEPACGKSFNFKKHLKEHMKLHSDTRDYICEFCARSFRTSSNLVIHRRIHTGEKPLQCEICGFTCRQKASLNWHQRKHAETVAALRFPCEFCGKRFEKPDSVAAHRSKSHPALLLAPQESPSGPLEPCPSISAPGPLGSSEGSRPSASPQAPTLLPQQ</sequence>
<dbReference type="EMBL" id="AK000538">
    <property type="protein sequence ID" value="BAA91239.1"/>
    <property type="molecule type" value="mRNA"/>
</dbReference>
<dbReference type="EMBL" id="AK001070">
    <property type="protein sequence ID" value="BAA91490.1"/>
    <property type="molecule type" value="mRNA"/>
</dbReference>
<dbReference type="EMBL" id="AK302187">
    <property type="protein sequence ID" value="BAG63552.1"/>
    <property type="molecule type" value="mRNA"/>
</dbReference>
<dbReference type="EMBL" id="AL133100">
    <property type="protein sequence ID" value="CAB61410.2"/>
    <property type="molecule type" value="mRNA"/>
</dbReference>
<dbReference type="EMBL" id="AL672291">
    <property type="status" value="NOT_ANNOTATED_CDS"/>
    <property type="molecule type" value="Genomic_DNA"/>
</dbReference>
<dbReference type="EMBL" id="BC002948">
    <property type="protein sequence ID" value="AAH02948.1"/>
    <property type="molecule type" value="mRNA"/>
</dbReference>
<dbReference type="EMBL" id="AF256175">
    <property type="protein sequence ID" value="AAG15327.1"/>
    <property type="molecule type" value="Transcribed_RNA"/>
</dbReference>
<dbReference type="CCDS" id="CCDS31127.1">
    <molecule id="Q9BU19-1"/>
</dbReference>
<dbReference type="CCDS" id="CCDS44348.1">
    <molecule id="Q9BU19-5"/>
</dbReference>
<dbReference type="CCDS" id="CCDS53487.1">
    <molecule id="Q9BU19-2"/>
</dbReference>
<dbReference type="PIR" id="T42682">
    <property type="entry name" value="T42682"/>
</dbReference>
<dbReference type="RefSeq" id="NP_001129508.1">
    <molecule id="Q9BU19-5"/>
    <property type="nucleotide sequence ID" value="NM_001136036.3"/>
</dbReference>
<dbReference type="RefSeq" id="NP_001180257.1">
    <molecule id="Q9BU19-2"/>
    <property type="nucleotide sequence ID" value="NM_001193328.2"/>
</dbReference>
<dbReference type="RefSeq" id="NP_060335.2">
    <molecule id="Q9BU19-1"/>
    <property type="nucleotide sequence ID" value="NM_017865.3"/>
</dbReference>
<dbReference type="RefSeq" id="XP_011542524.1">
    <molecule id="Q9BU19-1"/>
    <property type="nucleotide sequence ID" value="XM_011544222.2"/>
</dbReference>
<dbReference type="RefSeq" id="XP_047280552.1">
    <molecule id="Q9BU19-2"/>
    <property type="nucleotide sequence ID" value="XM_047424596.1"/>
</dbReference>
<dbReference type="RefSeq" id="XP_054193522.1">
    <molecule id="Q9BU19-1"/>
    <property type="nucleotide sequence ID" value="XM_054337547.1"/>
</dbReference>
<dbReference type="RefSeq" id="XP_054193530.1">
    <molecule id="Q9BU19-2"/>
    <property type="nucleotide sequence ID" value="XM_054337555.1"/>
</dbReference>
<dbReference type="PDB" id="2D9H">
    <property type="method" value="NMR"/>
    <property type="chains" value="A=417-481"/>
</dbReference>
<dbReference type="PDB" id="2DLK">
    <property type="method" value="NMR"/>
    <property type="chains" value="A=328-393"/>
</dbReference>
<dbReference type="PDB" id="6H0G">
    <property type="method" value="X-ray"/>
    <property type="resolution" value="4.25 A"/>
    <property type="chains" value="C/F=416-441"/>
</dbReference>
<dbReference type="PDBsum" id="2D9H"/>
<dbReference type="PDBsum" id="2DLK"/>
<dbReference type="PDBsum" id="6H0G"/>
<dbReference type="SMR" id="Q9BU19"/>
<dbReference type="BioGRID" id="120789">
    <property type="interactions" value="42"/>
</dbReference>
<dbReference type="FunCoup" id="Q9BU19">
    <property type="interactions" value="1134"/>
</dbReference>
<dbReference type="IntAct" id="Q9BU19">
    <property type="interactions" value="37"/>
</dbReference>
<dbReference type="STRING" id="9606.ENSP00000391200"/>
<dbReference type="GlyGen" id="Q9BU19">
    <property type="glycosylation" value="2 sites"/>
</dbReference>
<dbReference type="iPTMnet" id="Q9BU19"/>
<dbReference type="PhosphoSitePlus" id="Q9BU19"/>
<dbReference type="BioMuta" id="ZNF692"/>
<dbReference type="DMDM" id="74761262"/>
<dbReference type="jPOST" id="Q9BU19"/>
<dbReference type="MassIVE" id="Q9BU19"/>
<dbReference type="PaxDb" id="9606-ENSP00000391200"/>
<dbReference type="PeptideAtlas" id="Q9BU19"/>
<dbReference type="ProteomicsDB" id="79040">
    <molecule id="Q9BU19-1"/>
</dbReference>
<dbReference type="ProteomicsDB" id="79041">
    <molecule id="Q9BU19-2"/>
</dbReference>
<dbReference type="ProteomicsDB" id="79042">
    <molecule id="Q9BU19-3"/>
</dbReference>
<dbReference type="ProteomicsDB" id="79044">
    <molecule id="Q9BU19-5"/>
</dbReference>
<dbReference type="TopDownProteomics" id="Q9BU19-3">
    <molecule id="Q9BU19-3"/>
</dbReference>
<dbReference type="Antibodypedia" id="54395">
    <property type="antibodies" value="40 antibodies from 14 providers"/>
</dbReference>
<dbReference type="DNASU" id="55657"/>
<dbReference type="Ensembl" id="ENST00000306601.9">
    <molecule id="Q9BU19-1"/>
    <property type="protein sequence ID" value="ENSP00000305483.5"/>
    <property type="gene ID" value="ENSG00000171163.16"/>
</dbReference>
<dbReference type="Ensembl" id="ENST00000366471.7">
    <molecule id="Q9BU19-2"/>
    <property type="protein sequence ID" value="ENSP00000355427.3"/>
    <property type="gene ID" value="ENSG00000171163.16"/>
</dbReference>
<dbReference type="Ensembl" id="ENST00000451251.5">
    <molecule id="Q9BU19-5"/>
    <property type="protein sequence ID" value="ENSP00000391200.1"/>
    <property type="gene ID" value="ENSG00000171163.16"/>
</dbReference>
<dbReference type="Ensembl" id="ENST00000463519.5">
    <molecule id="Q9BU19-4"/>
    <property type="protein sequence ID" value="ENSP00000436308.1"/>
    <property type="gene ID" value="ENSG00000171163.16"/>
</dbReference>
<dbReference type="GeneID" id="55657"/>
<dbReference type="KEGG" id="hsa:55657"/>
<dbReference type="MANE-Select" id="ENST00000306601.9">
    <property type="protein sequence ID" value="ENSP00000305483.5"/>
    <property type="RefSeq nucleotide sequence ID" value="NM_017865.4"/>
    <property type="RefSeq protein sequence ID" value="NP_060335.2"/>
</dbReference>
<dbReference type="UCSC" id="uc001ifc.3">
    <molecule id="Q9BU19-1"/>
    <property type="organism name" value="human"/>
</dbReference>
<dbReference type="AGR" id="HGNC:26049"/>
<dbReference type="CTD" id="55657"/>
<dbReference type="DisGeNET" id="55657"/>
<dbReference type="GeneCards" id="ZNF692"/>
<dbReference type="HGNC" id="HGNC:26049">
    <property type="gene designation" value="ZNF692"/>
</dbReference>
<dbReference type="HPA" id="ENSG00000171163">
    <property type="expression patterns" value="Low tissue specificity"/>
</dbReference>
<dbReference type="MIM" id="617758">
    <property type="type" value="gene"/>
</dbReference>
<dbReference type="neXtProt" id="NX_Q9BU19"/>
<dbReference type="OpenTargets" id="ENSG00000171163"/>
<dbReference type="PharmGKB" id="PA142670491"/>
<dbReference type="VEuPathDB" id="HostDB:ENSG00000171163"/>
<dbReference type="eggNOG" id="KOG1721">
    <property type="taxonomic scope" value="Eukaryota"/>
</dbReference>
<dbReference type="GeneTree" id="ENSGT00940000161175"/>
<dbReference type="HOGENOM" id="CLU_045687_1_0_1"/>
<dbReference type="InParanoid" id="Q9BU19"/>
<dbReference type="OrthoDB" id="8685330at2759"/>
<dbReference type="PAN-GO" id="Q9BU19">
    <property type="GO annotations" value="3 GO annotations based on evolutionary models"/>
</dbReference>
<dbReference type="PhylomeDB" id="Q9BU19"/>
<dbReference type="TreeFam" id="TF332664"/>
<dbReference type="PathwayCommons" id="Q9BU19"/>
<dbReference type="Reactome" id="R-HSA-212436">
    <property type="pathway name" value="Generic Transcription Pathway"/>
</dbReference>
<dbReference type="SignaLink" id="Q9BU19"/>
<dbReference type="SIGNOR" id="Q9BU19"/>
<dbReference type="BioGRID-ORCS" id="55657">
    <property type="hits" value="129 hits in 1180 CRISPR screens"/>
</dbReference>
<dbReference type="ChiTaRS" id="ZNF692">
    <property type="organism name" value="human"/>
</dbReference>
<dbReference type="EvolutionaryTrace" id="Q9BU19"/>
<dbReference type="GenomeRNAi" id="55657"/>
<dbReference type="Pharos" id="Q9BU19">
    <property type="development level" value="Tbio"/>
</dbReference>
<dbReference type="PRO" id="PR:Q9BU19"/>
<dbReference type="Proteomes" id="UP000005640">
    <property type="component" value="Chromosome 1"/>
</dbReference>
<dbReference type="RNAct" id="Q9BU19">
    <property type="molecule type" value="protein"/>
</dbReference>
<dbReference type="Bgee" id="ENSG00000171163">
    <property type="expression patterns" value="Expressed in right hemisphere of cerebellum and 194 other cell types or tissues"/>
</dbReference>
<dbReference type="ExpressionAtlas" id="Q9BU19">
    <property type="expression patterns" value="baseline and differential"/>
</dbReference>
<dbReference type="GO" id="GO:0005730">
    <property type="term" value="C:nucleolus"/>
    <property type="evidence" value="ECO:0000314"/>
    <property type="project" value="HPA"/>
</dbReference>
<dbReference type="GO" id="GO:0005654">
    <property type="term" value="C:nucleoplasm"/>
    <property type="evidence" value="ECO:0000314"/>
    <property type="project" value="HPA"/>
</dbReference>
<dbReference type="GO" id="GO:0003700">
    <property type="term" value="F:DNA-binding transcription factor activity"/>
    <property type="evidence" value="ECO:0000318"/>
    <property type="project" value="GO_Central"/>
</dbReference>
<dbReference type="GO" id="GO:0001227">
    <property type="term" value="F:DNA-binding transcription repressor activity, RNA polymerase II-specific"/>
    <property type="evidence" value="ECO:0000314"/>
    <property type="project" value="NTNU_SB"/>
</dbReference>
<dbReference type="GO" id="GO:0000978">
    <property type="term" value="F:RNA polymerase II cis-regulatory region sequence-specific DNA binding"/>
    <property type="evidence" value="ECO:0000314"/>
    <property type="project" value="NTNU_SB"/>
</dbReference>
<dbReference type="GO" id="GO:0008270">
    <property type="term" value="F:zinc ion binding"/>
    <property type="evidence" value="ECO:0007669"/>
    <property type="project" value="UniProtKB-KW"/>
</dbReference>
<dbReference type="GO" id="GO:0000122">
    <property type="term" value="P:negative regulation of transcription by RNA polymerase II"/>
    <property type="evidence" value="ECO:0000314"/>
    <property type="project" value="NTNU_SB"/>
</dbReference>
<dbReference type="GO" id="GO:0006111">
    <property type="term" value="P:regulation of gluconeogenesis"/>
    <property type="evidence" value="ECO:0000315"/>
    <property type="project" value="UniProtKB"/>
</dbReference>
<dbReference type="GO" id="GO:0006357">
    <property type="term" value="P:regulation of transcription by RNA polymerase II"/>
    <property type="evidence" value="ECO:0000318"/>
    <property type="project" value="GO_Central"/>
</dbReference>
<dbReference type="FunFam" id="3.30.160.60:FF:000183">
    <property type="entry name" value="E3 ubiquitin-protein ligase ZFP91"/>
    <property type="match status" value="1"/>
</dbReference>
<dbReference type="FunFam" id="3.30.160.60:FF:000511">
    <property type="entry name" value="zinc finger protein 692 isoform X2"/>
    <property type="match status" value="1"/>
</dbReference>
<dbReference type="FunFam" id="3.30.160.60:FF:000577">
    <property type="entry name" value="zinc finger protein 692 isoform X2"/>
    <property type="match status" value="1"/>
</dbReference>
<dbReference type="FunFam" id="3.30.160.60:FF:000598">
    <property type="entry name" value="zinc finger protein 692 isoform X2"/>
    <property type="match status" value="1"/>
</dbReference>
<dbReference type="Gene3D" id="3.30.160.60">
    <property type="entry name" value="Classic Zinc Finger"/>
    <property type="match status" value="5"/>
</dbReference>
<dbReference type="InterPro" id="IPR050888">
    <property type="entry name" value="ZnF_C2H2-type_TF"/>
</dbReference>
<dbReference type="InterPro" id="IPR036236">
    <property type="entry name" value="Znf_C2H2_sf"/>
</dbReference>
<dbReference type="InterPro" id="IPR013087">
    <property type="entry name" value="Znf_C2H2_type"/>
</dbReference>
<dbReference type="PANTHER" id="PTHR24406">
    <property type="entry name" value="TRANSCRIPTIONAL REPRESSOR CTCFL-RELATED"/>
    <property type="match status" value="1"/>
</dbReference>
<dbReference type="Pfam" id="PF00096">
    <property type="entry name" value="zf-C2H2"/>
    <property type="match status" value="4"/>
</dbReference>
<dbReference type="SMART" id="SM00355">
    <property type="entry name" value="ZnF_C2H2"/>
    <property type="match status" value="5"/>
</dbReference>
<dbReference type="SUPFAM" id="SSF57667">
    <property type="entry name" value="beta-beta-alpha zinc fingers"/>
    <property type="match status" value="3"/>
</dbReference>
<dbReference type="PROSITE" id="PS00028">
    <property type="entry name" value="ZINC_FINGER_C2H2_1"/>
    <property type="match status" value="5"/>
</dbReference>
<dbReference type="PROSITE" id="PS50157">
    <property type="entry name" value="ZINC_FINGER_C2H2_2"/>
    <property type="match status" value="5"/>
</dbReference>
<name>ZN692_HUMAN</name>
<accession>Q9BU19</accession>
<accession>B4DXZ0</accession>
<accession>Q5SRA5</accession>
<accession>Q5SRA6</accession>
<accession>Q9HBC9</accession>
<accession>Q9NW93</accession>
<accession>Q9NWY6</accession>
<accession>Q9UF97</accession>
<protein>
    <recommendedName>
        <fullName evidence="10">Zinc finger protein 692</fullName>
    </recommendedName>
    <alternativeName>
        <fullName evidence="8">AICAR responsive element binding protein</fullName>
    </alternativeName>
</protein>
<keyword id="KW-0002">3D-structure</keyword>
<keyword id="KW-0025">Alternative splicing</keyword>
<keyword id="KW-0238">DNA-binding</keyword>
<keyword id="KW-0479">Metal-binding</keyword>
<keyword id="KW-0539">Nucleus</keyword>
<keyword id="KW-0597">Phosphoprotein</keyword>
<keyword id="KW-1267">Proteomics identification</keyword>
<keyword id="KW-1185">Reference proteome</keyword>
<keyword id="KW-0677">Repeat</keyword>
<keyword id="KW-0804">Transcription</keyword>
<keyword id="KW-0805">Transcription regulation</keyword>
<keyword id="KW-0862">Zinc</keyword>
<keyword id="KW-0863">Zinc-finger</keyword>
<feature type="chain" id="PRO_0000234014" description="Zinc finger protein 692">
    <location>
        <begin position="1"/>
        <end position="519"/>
    </location>
</feature>
<feature type="zinc finger region" description="C2H2-type 1" evidence="2">
    <location>
        <begin position="328"/>
        <end position="353"/>
    </location>
</feature>
<feature type="zinc finger region" description="C2H2-type 2" evidence="2">
    <location>
        <begin position="359"/>
        <end position="383"/>
    </location>
</feature>
<feature type="zinc finger region" description="C2H2-type 3" evidence="2">
    <location>
        <begin position="389"/>
        <end position="411"/>
    </location>
</feature>
<feature type="zinc finger region" description="C2H2-type 4" evidence="2">
    <location>
        <begin position="417"/>
        <end position="439"/>
    </location>
</feature>
<feature type="zinc finger region" description="C2H2-type 5" evidence="2">
    <location>
        <begin position="448"/>
        <end position="471"/>
    </location>
</feature>
<feature type="region of interest" description="Disordered" evidence="3">
    <location>
        <begin position="123"/>
        <end position="314"/>
    </location>
</feature>
<feature type="region of interest" description="Disordered" evidence="3">
    <location>
        <begin position="469"/>
        <end position="519"/>
    </location>
</feature>
<feature type="compositionally biased region" description="Polar residues" evidence="3">
    <location>
        <begin position="145"/>
        <end position="155"/>
    </location>
</feature>
<feature type="compositionally biased region" description="Basic and acidic residues" evidence="3">
    <location>
        <begin position="164"/>
        <end position="173"/>
    </location>
</feature>
<feature type="compositionally biased region" description="Pro residues" evidence="3">
    <location>
        <begin position="177"/>
        <end position="187"/>
    </location>
</feature>
<feature type="compositionally biased region" description="Acidic residues" evidence="3">
    <location>
        <begin position="188"/>
        <end position="206"/>
    </location>
</feature>
<feature type="compositionally biased region" description="Low complexity" evidence="3">
    <location>
        <begin position="247"/>
        <end position="266"/>
    </location>
</feature>
<feature type="compositionally biased region" description="Polar residues" evidence="3">
    <location>
        <begin position="277"/>
        <end position="303"/>
    </location>
</feature>
<feature type="compositionally biased region" description="Polar residues" evidence="3">
    <location>
        <begin position="501"/>
        <end position="519"/>
    </location>
</feature>
<feature type="modified residue" description="Phosphoserine" evidence="11">
    <location>
        <position position="162"/>
    </location>
</feature>
<feature type="modified residue" description="Phosphoserine" evidence="11">
    <location>
        <position position="231"/>
    </location>
</feature>
<feature type="modified residue" description="Phosphoserine; by AMPK" evidence="5">
    <location>
        <position position="470"/>
    </location>
</feature>
<feature type="splice variant" id="VSP_043025" description="In isoform 5." evidence="7">
    <original>M</original>
    <variation>MPLVHM</variation>
    <location>
        <position position="1"/>
    </location>
</feature>
<feature type="splice variant" id="VSP_018185" description="In isoform 4." evidence="9">
    <original>YTSSGCVLCAGPEPLPPKGLQYLVLLSHAHSRECSL</original>
    <variation>ACPAALFHPQVSHFTRTACVTCGLRGSCSPPHGLSE</variation>
    <location>
        <begin position="61"/>
        <end position="96"/>
    </location>
</feature>
<feature type="splice variant" id="VSP_018186" description="In isoform 3." evidence="7">
    <location>
        <begin position="88"/>
        <end position="259"/>
    </location>
</feature>
<feature type="splice variant" id="VSP_018187" description="In isoform 4." evidence="9">
    <location>
        <begin position="97"/>
        <end position="519"/>
    </location>
</feature>
<feature type="splice variant" id="VSP_018188" description="In isoform 2." evidence="7">
    <original>RRVGPPPETFPPPGEEEGEEEEDNDEDEEEMLSDASLWTYSSSPDD</original>
    <variation>S</variation>
    <location>
        <begin position="175"/>
        <end position="220"/>
    </location>
</feature>
<feature type="sequence variant" id="VAR_033590" description="In dbSNP:rs13313088." evidence="4">
    <original>P</original>
    <variation>R</variation>
    <location>
        <position position="230"/>
    </location>
</feature>
<feature type="mutagenesis site" description="Does not affect phosphorylation by AMPK." evidence="5">
    <original>T</original>
    <variation>A</variation>
    <location>
        <position position="62"/>
    </location>
</feature>
<feature type="mutagenesis site" description="Does not affect phosphorylation by AMPK." evidence="5">
    <original>S</original>
    <variation>A</variation>
    <location>
        <position position="63"/>
    </location>
</feature>
<feature type="mutagenesis site" description="Does not affect phosphorylation by AMPK." evidence="5">
    <original>T</original>
    <variation>A</variation>
    <location>
        <position position="386"/>
    </location>
</feature>
<feature type="mutagenesis site" description="Does not affect phosphorylation by AMPK." evidence="5">
    <original>S</original>
    <variation>A</variation>
    <location>
        <position position="402"/>
    </location>
</feature>
<feature type="mutagenesis site" description="Does not affect phosphorylation by AMPK." evidence="5">
    <original>T</original>
    <variation>A</variation>
    <location>
        <position position="442"/>
    </location>
</feature>
<feature type="mutagenesis site" description="Reduces phosphorylation by AMPK. Does not affect DNA binding. Does not repress transcription of PCK1." evidence="5">
    <original>S</original>
    <variation>A</variation>
    <location>
        <position position="470"/>
    </location>
</feature>
<feature type="sequence conflict" description="In Ref. 2; BAA91490." evidence="10" ref="2">
    <original>K</original>
    <variation>R</variation>
    <location>
        <position position="373"/>
    </location>
</feature>
<feature type="sequence conflict" description="In Ref. 2; BAA91239." evidence="10" ref="2">
    <original>S</original>
    <variation>G</variation>
    <location>
        <position position="401"/>
    </location>
</feature>
<feature type="sequence conflict" description="In Ref. 2; BAA91490." evidence="10" ref="2">
    <original>H</original>
    <variation>R</variation>
    <location>
        <position position="435"/>
    </location>
</feature>
<feature type="turn" evidence="13">
    <location>
        <begin position="333"/>
        <end position="335"/>
    </location>
</feature>
<feature type="strand" evidence="13">
    <location>
        <begin position="338"/>
        <end position="341"/>
    </location>
</feature>
<feature type="helix" evidence="13">
    <location>
        <begin position="342"/>
        <end position="351"/>
    </location>
</feature>
<feature type="helix" evidence="13">
    <location>
        <begin position="352"/>
        <end position="354"/>
    </location>
</feature>
<feature type="turn" evidence="13">
    <location>
        <begin position="364"/>
        <end position="366"/>
    </location>
</feature>
<feature type="strand" evidence="13">
    <location>
        <begin position="369"/>
        <end position="372"/>
    </location>
</feature>
<feature type="helix" evidence="13">
    <location>
        <begin position="373"/>
        <end position="384"/>
    </location>
</feature>
<feature type="strand" evidence="12">
    <location>
        <begin position="420"/>
        <end position="422"/>
    </location>
</feature>
<feature type="strand" evidence="12">
    <location>
        <begin position="425"/>
        <end position="428"/>
    </location>
</feature>
<feature type="helix" evidence="12">
    <location>
        <begin position="429"/>
        <end position="442"/>
    </location>
</feature>
<feature type="turn" evidence="12">
    <location>
        <begin position="443"/>
        <end position="445"/>
    </location>
</feature>
<feature type="turn" evidence="12">
    <location>
        <begin position="451"/>
        <end position="453"/>
    </location>
</feature>
<feature type="strand" evidence="12">
    <location>
        <begin position="456"/>
        <end position="459"/>
    </location>
</feature>
<feature type="helix" evidence="12">
    <location>
        <begin position="460"/>
        <end position="469"/>
    </location>
</feature>
<feature type="turn" evidence="12">
    <location>
        <begin position="472"/>
        <end position="474"/>
    </location>
</feature>
<feature type="strand" evidence="12">
    <location>
        <begin position="479"/>
        <end position="481"/>
    </location>
</feature>
<proteinExistence type="evidence at protein level"/>
<comment type="function">
    <text evidence="5 6">May act as an transcriptional repressor for PCK1 gene expression, in turn may participate in the hepatic gluconeogenesis regulation through the activated AMPK signaling pathway.</text>
</comment>
<comment type="interaction">
    <interactant intactId="EBI-12076976">
        <id>Q9BU19</id>
    </interactant>
    <interactant intactId="EBI-399080">
        <id>Q92993</id>
        <label>KAT5</label>
    </interactant>
    <organismsDiffer>false</organismsDiffer>
    <experiments>3</experiments>
</comment>
<comment type="subcellular location">
    <subcellularLocation>
        <location evidence="10">Nucleus</location>
    </subcellularLocation>
</comment>
<comment type="alternative products">
    <event type="alternative splicing"/>
    <isoform>
        <id>Q9BU19-1</id>
        <name>1</name>
        <sequence type="displayed"/>
    </isoform>
    <isoform>
        <id>Q9BU19-2</id>
        <name>2</name>
        <sequence type="described" ref="VSP_018188"/>
    </isoform>
    <isoform>
        <id>Q9BU19-3</id>
        <name>3</name>
        <sequence type="described" ref="VSP_018186"/>
    </isoform>
    <isoform>
        <id>Q9BU19-4</id>
        <name>4</name>
        <sequence type="described" ref="VSP_018185 VSP_018187"/>
    </isoform>
    <isoform>
        <id>Q9BU19-5</id>
        <name>5</name>
        <sequence type="described" ref="VSP_043025"/>
    </isoform>
</comment>
<comment type="tissue specificity">
    <text evidence="5">Ubiquitous (PubMed:17097062). Highly expressed in brain, thymus and spleen (PubMed:17097062).</text>
</comment>
<comment type="PTM">
    <text evidence="5">Phosphorylation at Ser-470 results in loss of DNA-binding activity.</text>
</comment>
<comment type="similarity">
    <text evidence="10">Belongs to the krueppel C2H2-type zinc-finger protein family.</text>
</comment>
<gene>
    <name type="primary">ZNF692</name>
    <name evidence="8" type="synonym">AREBP</name>
    <name evidence="1" type="synonym">ZFP692</name>
</gene>
<evidence type="ECO:0000250" key="1">
    <source>
        <dbReference type="UniProtKB" id="Q3U381"/>
    </source>
</evidence>
<evidence type="ECO:0000255" key="2">
    <source>
        <dbReference type="PROSITE-ProRule" id="PRU00042"/>
    </source>
</evidence>
<evidence type="ECO:0000256" key="3">
    <source>
        <dbReference type="SAM" id="MobiDB-lite"/>
    </source>
</evidence>
<evidence type="ECO:0000269" key="4">
    <source>
    </source>
</evidence>
<evidence type="ECO:0000269" key="5">
    <source>
    </source>
</evidence>
<evidence type="ECO:0000269" key="6">
    <source>
    </source>
</evidence>
<evidence type="ECO:0000303" key="7">
    <source>
    </source>
</evidence>
<evidence type="ECO:0000303" key="8">
    <source>
    </source>
</evidence>
<evidence type="ECO:0000303" key="9">
    <source>
    </source>
</evidence>
<evidence type="ECO:0000305" key="10"/>
<evidence type="ECO:0007744" key="11">
    <source>
    </source>
</evidence>
<evidence type="ECO:0007829" key="12">
    <source>
        <dbReference type="PDB" id="2D9H"/>
    </source>
</evidence>
<evidence type="ECO:0007829" key="13">
    <source>
        <dbReference type="PDB" id="2DLK"/>
    </source>
</evidence>
<reference key="1">
    <citation type="journal article" date="2006" name="Biochem. Biophys. Res. Commun.">
        <title>AMP-activated protein kinase regulates PEPCK gene expression by direct phosphorylation of a novel zinc finger transcription factor.</title>
        <authorList>
            <person name="Inoue E."/>
            <person name="Yamauchi J."/>
        </authorList>
    </citation>
    <scope>NUCLEOTIDE SEQUENCE [MRNA]</scope>
    <scope>TISSUE SPECIFICITY</scope>
    <scope>MUTAGENESIS OF THR-62; SER-63; THR-386; SER-402; THR-442 AND SER-470</scope>
    <scope>PHOSPHORYLATION AT SER-470</scope>
    <scope>FUNCTION</scope>
</reference>
<reference key="2">
    <citation type="journal article" date="2004" name="Nat. Genet.">
        <title>Complete sequencing and characterization of 21,243 full-length human cDNAs.</title>
        <authorList>
            <person name="Ota T."/>
            <person name="Suzuki Y."/>
            <person name="Nishikawa T."/>
            <person name="Otsuki T."/>
            <person name="Sugiyama T."/>
            <person name="Irie R."/>
            <person name="Wakamatsu A."/>
            <person name="Hayashi K."/>
            <person name="Sato H."/>
            <person name="Nagai K."/>
            <person name="Kimura K."/>
            <person name="Makita H."/>
            <person name="Sekine M."/>
            <person name="Obayashi M."/>
            <person name="Nishi T."/>
            <person name="Shibahara T."/>
            <person name="Tanaka T."/>
            <person name="Ishii S."/>
            <person name="Yamamoto J."/>
            <person name="Saito K."/>
            <person name="Kawai Y."/>
            <person name="Isono Y."/>
            <person name="Nakamura Y."/>
            <person name="Nagahari K."/>
            <person name="Murakami K."/>
            <person name="Yasuda T."/>
            <person name="Iwayanagi T."/>
            <person name="Wagatsuma M."/>
            <person name="Shiratori A."/>
            <person name="Sudo H."/>
            <person name="Hosoiri T."/>
            <person name="Kaku Y."/>
            <person name="Kodaira H."/>
            <person name="Kondo H."/>
            <person name="Sugawara M."/>
            <person name="Takahashi M."/>
            <person name="Kanda K."/>
            <person name="Yokoi T."/>
            <person name="Furuya T."/>
            <person name="Kikkawa E."/>
            <person name="Omura Y."/>
            <person name="Abe K."/>
            <person name="Kamihara K."/>
            <person name="Katsuta N."/>
            <person name="Sato K."/>
            <person name="Tanikawa M."/>
            <person name="Yamazaki M."/>
            <person name="Ninomiya K."/>
            <person name="Ishibashi T."/>
            <person name="Yamashita H."/>
            <person name="Murakawa K."/>
            <person name="Fujimori K."/>
            <person name="Tanai H."/>
            <person name="Kimata M."/>
            <person name="Watanabe M."/>
            <person name="Hiraoka S."/>
            <person name="Chiba Y."/>
            <person name="Ishida S."/>
            <person name="Ono Y."/>
            <person name="Takiguchi S."/>
            <person name="Watanabe S."/>
            <person name="Yosida M."/>
            <person name="Hotuta T."/>
            <person name="Kusano J."/>
            <person name="Kanehori K."/>
            <person name="Takahashi-Fujii A."/>
            <person name="Hara H."/>
            <person name="Tanase T.-O."/>
            <person name="Nomura Y."/>
            <person name="Togiya S."/>
            <person name="Komai F."/>
            <person name="Hara R."/>
            <person name="Takeuchi K."/>
            <person name="Arita M."/>
            <person name="Imose N."/>
            <person name="Musashino K."/>
            <person name="Yuuki H."/>
            <person name="Oshima A."/>
            <person name="Sasaki N."/>
            <person name="Aotsuka S."/>
            <person name="Yoshikawa Y."/>
            <person name="Matsunawa H."/>
            <person name="Ichihara T."/>
            <person name="Shiohata N."/>
            <person name="Sano S."/>
            <person name="Moriya S."/>
            <person name="Momiyama H."/>
            <person name="Satoh N."/>
            <person name="Takami S."/>
            <person name="Terashima Y."/>
            <person name="Suzuki O."/>
            <person name="Nakagawa S."/>
            <person name="Senoh A."/>
            <person name="Mizoguchi H."/>
            <person name="Goto Y."/>
            <person name="Shimizu F."/>
            <person name="Wakebe H."/>
            <person name="Hishigaki H."/>
            <person name="Watanabe T."/>
            <person name="Sugiyama A."/>
            <person name="Takemoto M."/>
            <person name="Kawakami B."/>
            <person name="Yamazaki M."/>
            <person name="Watanabe K."/>
            <person name="Kumagai A."/>
            <person name="Itakura S."/>
            <person name="Fukuzumi Y."/>
            <person name="Fujimori Y."/>
            <person name="Komiyama M."/>
            <person name="Tashiro H."/>
            <person name="Tanigami A."/>
            <person name="Fujiwara T."/>
            <person name="Ono T."/>
            <person name="Yamada K."/>
            <person name="Fujii Y."/>
            <person name="Ozaki K."/>
            <person name="Hirao M."/>
            <person name="Ohmori Y."/>
            <person name="Kawabata A."/>
            <person name="Hikiji T."/>
            <person name="Kobatake N."/>
            <person name="Inagaki H."/>
            <person name="Ikema Y."/>
            <person name="Okamoto S."/>
            <person name="Okitani R."/>
            <person name="Kawakami T."/>
            <person name="Noguchi S."/>
            <person name="Itoh T."/>
            <person name="Shigeta K."/>
            <person name="Senba T."/>
            <person name="Matsumura K."/>
            <person name="Nakajima Y."/>
            <person name="Mizuno T."/>
            <person name="Morinaga M."/>
            <person name="Sasaki M."/>
            <person name="Togashi T."/>
            <person name="Oyama M."/>
            <person name="Hata H."/>
            <person name="Watanabe M."/>
            <person name="Komatsu T."/>
            <person name="Mizushima-Sugano J."/>
            <person name="Satoh T."/>
            <person name="Shirai Y."/>
            <person name="Takahashi Y."/>
            <person name="Nakagawa K."/>
            <person name="Okumura K."/>
            <person name="Nagase T."/>
            <person name="Nomura N."/>
            <person name="Kikuchi H."/>
            <person name="Masuho Y."/>
            <person name="Yamashita R."/>
            <person name="Nakai K."/>
            <person name="Yada T."/>
            <person name="Nakamura Y."/>
            <person name="Ohara O."/>
            <person name="Isogai T."/>
            <person name="Sugano S."/>
        </authorList>
    </citation>
    <scope>NUCLEOTIDE SEQUENCE [LARGE SCALE MRNA] (ISOFORMS 2; 3 AND 5)</scope>
    <scope>VARIANT ARG-230</scope>
    <source>
        <tissue>Carcinoma</tissue>
        <tissue>Embryo</tissue>
        <tissue>Testis</tissue>
    </source>
</reference>
<reference key="3">
    <citation type="journal article" date="2007" name="BMC Genomics">
        <title>The full-ORF clone resource of the German cDNA consortium.</title>
        <authorList>
            <person name="Bechtel S."/>
            <person name="Rosenfelder H."/>
            <person name="Duda A."/>
            <person name="Schmidt C.P."/>
            <person name="Ernst U."/>
            <person name="Wellenreuther R."/>
            <person name="Mehrle A."/>
            <person name="Schuster C."/>
            <person name="Bahr A."/>
            <person name="Bloecker H."/>
            <person name="Heubner D."/>
            <person name="Hoerlein A."/>
            <person name="Michel G."/>
            <person name="Wedler H."/>
            <person name="Koehrer K."/>
            <person name="Ottenwaelder B."/>
            <person name="Poustka A."/>
            <person name="Wiemann S."/>
            <person name="Schupp I."/>
        </authorList>
    </citation>
    <scope>NUCLEOTIDE SEQUENCE [LARGE SCALE MRNA] (ISOFORM 4)</scope>
    <source>
        <tissue>Testis</tissue>
    </source>
</reference>
<reference key="4">
    <citation type="journal article" date="2006" name="Nature">
        <title>The DNA sequence and biological annotation of human chromosome 1.</title>
        <authorList>
            <person name="Gregory S.G."/>
            <person name="Barlow K.F."/>
            <person name="McLay K.E."/>
            <person name="Kaul R."/>
            <person name="Swarbreck D."/>
            <person name="Dunham A."/>
            <person name="Scott C.E."/>
            <person name="Howe K.L."/>
            <person name="Woodfine K."/>
            <person name="Spencer C.C.A."/>
            <person name="Jones M.C."/>
            <person name="Gillson C."/>
            <person name="Searle S."/>
            <person name="Zhou Y."/>
            <person name="Kokocinski F."/>
            <person name="McDonald L."/>
            <person name="Evans R."/>
            <person name="Phillips K."/>
            <person name="Atkinson A."/>
            <person name="Cooper R."/>
            <person name="Jones C."/>
            <person name="Hall R.E."/>
            <person name="Andrews T.D."/>
            <person name="Lloyd C."/>
            <person name="Ainscough R."/>
            <person name="Almeida J.P."/>
            <person name="Ambrose K.D."/>
            <person name="Anderson F."/>
            <person name="Andrew R.W."/>
            <person name="Ashwell R.I.S."/>
            <person name="Aubin K."/>
            <person name="Babbage A.K."/>
            <person name="Bagguley C.L."/>
            <person name="Bailey J."/>
            <person name="Beasley H."/>
            <person name="Bethel G."/>
            <person name="Bird C.P."/>
            <person name="Bray-Allen S."/>
            <person name="Brown J.Y."/>
            <person name="Brown A.J."/>
            <person name="Buckley D."/>
            <person name="Burton J."/>
            <person name="Bye J."/>
            <person name="Carder C."/>
            <person name="Chapman J.C."/>
            <person name="Clark S.Y."/>
            <person name="Clarke G."/>
            <person name="Clee C."/>
            <person name="Cobley V."/>
            <person name="Collier R.E."/>
            <person name="Corby N."/>
            <person name="Coville G.J."/>
            <person name="Davies J."/>
            <person name="Deadman R."/>
            <person name="Dunn M."/>
            <person name="Earthrowl M."/>
            <person name="Ellington A.G."/>
            <person name="Errington H."/>
            <person name="Frankish A."/>
            <person name="Frankland J."/>
            <person name="French L."/>
            <person name="Garner P."/>
            <person name="Garnett J."/>
            <person name="Gay L."/>
            <person name="Ghori M.R.J."/>
            <person name="Gibson R."/>
            <person name="Gilby L.M."/>
            <person name="Gillett W."/>
            <person name="Glithero R.J."/>
            <person name="Grafham D.V."/>
            <person name="Griffiths C."/>
            <person name="Griffiths-Jones S."/>
            <person name="Grocock R."/>
            <person name="Hammond S."/>
            <person name="Harrison E.S.I."/>
            <person name="Hart E."/>
            <person name="Haugen E."/>
            <person name="Heath P.D."/>
            <person name="Holmes S."/>
            <person name="Holt K."/>
            <person name="Howden P.J."/>
            <person name="Hunt A.R."/>
            <person name="Hunt S.E."/>
            <person name="Hunter G."/>
            <person name="Isherwood J."/>
            <person name="James R."/>
            <person name="Johnson C."/>
            <person name="Johnson D."/>
            <person name="Joy A."/>
            <person name="Kay M."/>
            <person name="Kershaw J.K."/>
            <person name="Kibukawa M."/>
            <person name="Kimberley A.M."/>
            <person name="King A."/>
            <person name="Knights A.J."/>
            <person name="Lad H."/>
            <person name="Laird G."/>
            <person name="Lawlor S."/>
            <person name="Leongamornlert D.A."/>
            <person name="Lloyd D.M."/>
            <person name="Loveland J."/>
            <person name="Lovell J."/>
            <person name="Lush M.J."/>
            <person name="Lyne R."/>
            <person name="Martin S."/>
            <person name="Mashreghi-Mohammadi M."/>
            <person name="Matthews L."/>
            <person name="Matthews N.S.W."/>
            <person name="McLaren S."/>
            <person name="Milne S."/>
            <person name="Mistry S."/>
            <person name="Moore M.J.F."/>
            <person name="Nickerson T."/>
            <person name="O'Dell C.N."/>
            <person name="Oliver K."/>
            <person name="Palmeiri A."/>
            <person name="Palmer S.A."/>
            <person name="Parker A."/>
            <person name="Patel D."/>
            <person name="Pearce A.V."/>
            <person name="Peck A.I."/>
            <person name="Pelan S."/>
            <person name="Phelps K."/>
            <person name="Phillimore B.J."/>
            <person name="Plumb R."/>
            <person name="Rajan J."/>
            <person name="Raymond C."/>
            <person name="Rouse G."/>
            <person name="Saenphimmachak C."/>
            <person name="Sehra H.K."/>
            <person name="Sheridan E."/>
            <person name="Shownkeen R."/>
            <person name="Sims S."/>
            <person name="Skuce C.D."/>
            <person name="Smith M."/>
            <person name="Steward C."/>
            <person name="Subramanian S."/>
            <person name="Sycamore N."/>
            <person name="Tracey A."/>
            <person name="Tromans A."/>
            <person name="Van Helmond Z."/>
            <person name="Wall M."/>
            <person name="Wallis J.M."/>
            <person name="White S."/>
            <person name="Whitehead S.L."/>
            <person name="Wilkinson J.E."/>
            <person name="Willey D.L."/>
            <person name="Williams H."/>
            <person name="Wilming L."/>
            <person name="Wray P.W."/>
            <person name="Wu Z."/>
            <person name="Coulson A."/>
            <person name="Vaudin M."/>
            <person name="Sulston J.E."/>
            <person name="Durbin R.M."/>
            <person name="Hubbard T."/>
            <person name="Wooster R."/>
            <person name="Dunham I."/>
            <person name="Carter N.P."/>
            <person name="McVean G."/>
            <person name="Ross M.T."/>
            <person name="Harrow J."/>
            <person name="Olson M.V."/>
            <person name="Beck S."/>
            <person name="Rogers J."/>
            <person name="Bentley D.R."/>
        </authorList>
    </citation>
    <scope>NUCLEOTIDE SEQUENCE [LARGE SCALE GENOMIC DNA]</scope>
</reference>
<reference key="5">
    <citation type="journal article" date="2004" name="Genome Res.">
        <title>The status, quality, and expansion of the NIH full-length cDNA project: the Mammalian Gene Collection (MGC).</title>
        <authorList>
            <consortium name="The MGC Project Team"/>
        </authorList>
    </citation>
    <scope>NUCLEOTIDE SEQUENCE [LARGE SCALE MRNA] (ISOFORM 1)</scope>
    <source>
        <tissue>Lung</tissue>
    </source>
</reference>
<reference key="6">
    <citation type="submission" date="2000-04" db="EMBL/GenBank/DDBJ databases">
        <authorList>
            <person name="Pryor J.S."/>
            <person name="Sullivan L."/>
            <person name="Dial M."/>
            <person name="May K."/>
            <person name="Morgan M."/>
            <person name="Smith C."/>
            <person name="Buford D."/>
            <person name="Kirklin S."/>
            <person name="Williams D."/>
            <person name="Pugh M."/>
        </authorList>
    </citation>
    <scope>NUCLEOTIDE SEQUENCE [MRNA] OF 221-519</scope>
    <source>
        <tissue>Parathyroid adenoma</tissue>
    </source>
</reference>
<reference key="7">
    <citation type="journal article" date="2011" name="Biochem. Biophys. Res. Commun.">
        <title>AICAR response element binding protein (AREBP), a key modulator of hepatic glucose production regulated by AMPK in vivo.</title>
        <authorList>
            <person name="Shirai T."/>
            <person name="Inoue E."/>
            <person name="Ishimi Y."/>
            <person name="Yamauchi J."/>
        </authorList>
    </citation>
    <scope>FUNCTION</scope>
</reference>
<reference key="8">
    <citation type="journal article" date="2013" name="J. Proteome Res.">
        <title>Toward a comprehensive characterization of a human cancer cell phosphoproteome.</title>
        <authorList>
            <person name="Zhou H."/>
            <person name="Di Palma S."/>
            <person name="Preisinger C."/>
            <person name="Peng M."/>
            <person name="Polat A.N."/>
            <person name="Heck A.J."/>
            <person name="Mohammed S."/>
        </authorList>
    </citation>
    <scope>PHOSPHORYLATION [LARGE SCALE ANALYSIS] AT SER-162 AND SER-231</scope>
    <scope>IDENTIFICATION BY MASS SPECTROMETRY [LARGE SCALE ANALYSIS]</scope>
    <source>
        <tissue>Cervix carcinoma</tissue>
        <tissue>Erythroleukemia</tissue>
    </source>
</reference>
<reference key="9">
    <citation type="submission" date="2006-10" db="PDB data bank">
        <title>Solution structure of ZF-C2H2 domains of zinc finger protein 692.</title>
        <authorList>
            <consortium name="RIKEN structural genomics initiative (RSGI)"/>
        </authorList>
    </citation>
    <scope>STRUCTURE BY NMR OF 328-481</scope>
</reference>